<geneLocation type="chloroplast"/>
<name>ATPB_SCHSP</name>
<comment type="function">
    <text evidence="1">Produces ATP from ADP in the presence of a proton gradient across the membrane. The catalytic sites are hosted primarily by the beta subunits.</text>
</comment>
<comment type="catalytic activity">
    <reaction evidence="1">
        <text>ATP + H2O + 4 H(+)(in) = ADP + phosphate + 5 H(+)(out)</text>
        <dbReference type="Rhea" id="RHEA:57720"/>
        <dbReference type="ChEBI" id="CHEBI:15377"/>
        <dbReference type="ChEBI" id="CHEBI:15378"/>
        <dbReference type="ChEBI" id="CHEBI:30616"/>
        <dbReference type="ChEBI" id="CHEBI:43474"/>
        <dbReference type="ChEBI" id="CHEBI:456216"/>
        <dbReference type="EC" id="7.1.2.2"/>
    </reaction>
</comment>
<comment type="subunit">
    <text evidence="1">F-type ATPases have 2 components, CF(1) - the catalytic core - and CF(0) - the membrane proton channel. CF(1) has five subunits: alpha(3), beta(3), gamma(1), delta(1), epsilon(1). CF(0) has four main subunits: a(1), b(1), b'(1) and c(9-12).</text>
</comment>
<comment type="subcellular location">
    <subcellularLocation>
        <location evidence="1">Plastid</location>
        <location evidence="1">Chloroplast thylakoid membrane</location>
        <topology evidence="1">Peripheral membrane protein</topology>
    </subcellularLocation>
</comment>
<comment type="similarity">
    <text evidence="1">Belongs to the ATPase alpha/beta chains family.</text>
</comment>
<dbReference type="EC" id="7.1.2.2" evidence="1"/>
<dbReference type="EMBL" id="AJ235599">
    <property type="protein sequence ID" value="CAB89724.1"/>
    <property type="molecule type" value="Genomic_DNA"/>
</dbReference>
<dbReference type="GO" id="GO:0009535">
    <property type="term" value="C:chloroplast thylakoid membrane"/>
    <property type="evidence" value="ECO:0007669"/>
    <property type="project" value="UniProtKB-SubCell"/>
</dbReference>
<dbReference type="GO" id="GO:0005739">
    <property type="term" value="C:mitochondrion"/>
    <property type="evidence" value="ECO:0007669"/>
    <property type="project" value="GOC"/>
</dbReference>
<dbReference type="GO" id="GO:0045259">
    <property type="term" value="C:proton-transporting ATP synthase complex"/>
    <property type="evidence" value="ECO:0007669"/>
    <property type="project" value="UniProtKB-KW"/>
</dbReference>
<dbReference type="GO" id="GO:0005524">
    <property type="term" value="F:ATP binding"/>
    <property type="evidence" value="ECO:0007669"/>
    <property type="project" value="UniProtKB-UniRule"/>
</dbReference>
<dbReference type="GO" id="GO:0016887">
    <property type="term" value="F:ATP hydrolysis activity"/>
    <property type="evidence" value="ECO:0007669"/>
    <property type="project" value="InterPro"/>
</dbReference>
<dbReference type="GO" id="GO:0046933">
    <property type="term" value="F:proton-transporting ATP synthase activity, rotational mechanism"/>
    <property type="evidence" value="ECO:0007669"/>
    <property type="project" value="UniProtKB-UniRule"/>
</dbReference>
<dbReference type="GO" id="GO:0042776">
    <property type="term" value="P:proton motive force-driven mitochondrial ATP synthesis"/>
    <property type="evidence" value="ECO:0007669"/>
    <property type="project" value="TreeGrafter"/>
</dbReference>
<dbReference type="CDD" id="cd18110">
    <property type="entry name" value="ATP-synt_F1_beta_C"/>
    <property type="match status" value="1"/>
</dbReference>
<dbReference type="CDD" id="cd18115">
    <property type="entry name" value="ATP-synt_F1_beta_N"/>
    <property type="match status" value="1"/>
</dbReference>
<dbReference type="CDD" id="cd01133">
    <property type="entry name" value="F1-ATPase_beta_CD"/>
    <property type="match status" value="1"/>
</dbReference>
<dbReference type="FunFam" id="1.10.1140.10:FF:000001">
    <property type="entry name" value="ATP synthase subunit beta"/>
    <property type="match status" value="1"/>
</dbReference>
<dbReference type="FunFam" id="3.40.50.12240:FF:000006">
    <property type="entry name" value="ATP synthase subunit beta"/>
    <property type="match status" value="1"/>
</dbReference>
<dbReference type="FunFam" id="3.40.50.300:FF:000004">
    <property type="entry name" value="ATP synthase subunit beta"/>
    <property type="match status" value="1"/>
</dbReference>
<dbReference type="FunFam" id="2.40.10.170:FF:000002">
    <property type="entry name" value="ATP synthase subunit beta, chloroplastic"/>
    <property type="match status" value="1"/>
</dbReference>
<dbReference type="Gene3D" id="2.40.10.170">
    <property type="match status" value="1"/>
</dbReference>
<dbReference type="Gene3D" id="1.10.1140.10">
    <property type="entry name" value="Bovine Mitochondrial F1-atpase, Atp Synthase Beta Chain, Chain D, domain 3"/>
    <property type="match status" value="1"/>
</dbReference>
<dbReference type="Gene3D" id="3.40.50.300">
    <property type="entry name" value="P-loop containing nucleotide triphosphate hydrolases"/>
    <property type="match status" value="1"/>
</dbReference>
<dbReference type="HAMAP" id="MF_01347">
    <property type="entry name" value="ATP_synth_beta_bact"/>
    <property type="match status" value="1"/>
</dbReference>
<dbReference type="InterPro" id="IPR003593">
    <property type="entry name" value="AAA+_ATPase"/>
</dbReference>
<dbReference type="InterPro" id="IPR055190">
    <property type="entry name" value="ATP-synt_VA_C"/>
</dbReference>
<dbReference type="InterPro" id="IPR005722">
    <property type="entry name" value="ATP_synth_F1_bsu"/>
</dbReference>
<dbReference type="InterPro" id="IPR020003">
    <property type="entry name" value="ATPase_a/bsu_AS"/>
</dbReference>
<dbReference type="InterPro" id="IPR050053">
    <property type="entry name" value="ATPase_alpha/beta_chains"/>
</dbReference>
<dbReference type="InterPro" id="IPR004100">
    <property type="entry name" value="ATPase_F1/V1/A1_a/bsu_N"/>
</dbReference>
<dbReference type="InterPro" id="IPR036121">
    <property type="entry name" value="ATPase_F1/V1/A1_a/bsu_N_sf"/>
</dbReference>
<dbReference type="InterPro" id="IPR000194">
    <property type="entry name" value="ATPase_F1/V1/A1_a/bsu_nucl-bd"/>
</dbReference>
<dbReference type="InterPro" id="IPR024034">
    <property type="entry name" value="ATPase_F1/V1_b/a_C"/>
</dbReference>
<dbReference type="InterPro" id="IPR027417">
    <property type="entry name" value="P-loop_NTPase"/>
</dbReference>
<dbReference type="NCBIfam" id="TIGR01039">
    <property type="entry name" value="atpD"/>
    <property type="match status" value="1"/>
</dbReference>
<dbReference type="PANTHER" id="PTHR15184">
    <property type="entry name" value="ATP SYNTHASE"/>
    <property type="match status" value="1"/>
</dbReference>
<dbReference type="PANTHER" id="PTHR15184:SF76">
    <property type="entry name" value="ATP SYNTHASE SUBUNIT BETA, CHLOROPLASTIC"/>
    <property type="match status" value="1"/>
</dbReference>
<dbReference type="Pfam" id="PF00006">
    <property type="entry name" value="ATP-synt_ab"/>
    <property type="match status" value="1"/>
</dbReference>
<dbReference type="Pfam" id="PF02874">
    <property type="entry name" value="ATP-synt_ab_N"/>
    <property type="match status" value="1"/>
</dbReference>
<dbReference type="Pfam" id="PF22919">
    <property type="entry name" value="ATP-synt_VA_C"/>
    <property type="match status" value="1"/>
</dbReference>
<dbReference type="SMART" id="SM00382">
    <property type="entry name" value="AAA"/>
    <property type="match status" value="1"/>
</dbReference>
<dbReference type="SUPFAM" id="SSF47917">
    <property type="entry name" value="C-terminal domain of alpha and beta subunits of F1 ATP synthase"/>
    <property type="match status" value="1"/>
</dbReference>
<dbReference type="SUPFAM" id="SSF50615">
    <property type="entry name" value="N-terminal domain of alpha and beta subunits of F1 ATP synthase"/>
    <property type="match status" value="1"/>
</dbReference>
<dbReference type="SUPFAM" id="SSF52540">
    <property type="entry name" value="P-loop containing nucleoside triphosphate hydrolases"/>
    <property type="match status" value="1"/>
</dbReference>
<dbReference type="PROSITE" id="PS00152">
    <property type="entry name" value="ATPASE_ALPHA_BETA"/>
    <property type="match status" value="1"/>
</dbReference>
<gene>
    <name evidence="1" type="primary">atpB</name>
</gene>
<proteinExistence type="inferred from homology"/>
<feature type="chain" id="PRO_0000144549" description="ATP synthase subunit beta, chloroplastic">
    <location>
        <begin position="1"/>
        <end position="498"/>
    </location>
</feature>
<feature type="binding site" evidence="1">
    <location>
        <begin position="172"/>
        <end position="179"/>
    </location>
    <ligand>
        <name>ATP</name>
        <dbReference type="ChEBI" id="CHEBI:30616"/>
    </ligand>
</feature>
<organism>
    <name type="scientific">Schisandra sphenanthera</name>
    <name type="common">Southern magnolia vine</name>
    <name type="synonym">Schisandra chinensis var. rubriflora</name>
    <dbReference type="NCBI Taxonomy" id="13674"/>
    <lineage>
        <taxon>Eukaryota</taxon>
        <taxon>Viridiplantae</taxon>
        <taxon>Streptophyta</taxon>
        <taxon>Embryophyta</taxon>
        <taxon>Tracheophyta</taxon>
        <taxon>Spermatophyta</taxon>
        <taxon>Magnoliopsida</taxon>
        <taxon>Austrobaileyales</taxon>
        <taxon>Schisandraceae</taxon>
        <taxon>Schisandra</taxon>
    </lineage>
</organism>
<reference key="1">
    <citation type="journal article" date="2000" name="Syst. Biol.">
        <title>Phylogenetics of flowering plants based upon a combined analysis of plastid atpB and rbcL gene sequences.</title>
        <authorList>
            <person name="Savolainen V."/>
            <person name="Chase M.W."/>
            <person name="Morton C.M."/>
            <person name="Hoot S.B."/>
            <person name="Soltis D.E."/>
            <person name="Bayer C."/>
            <person name="Fay M.F."/>
            <person name="de Bruijn A."/>
            <person name="Sullivan S."/>
            <person name="Qiu Y.-L."/>
        </authorList>
    </citation>
    <scope>NUCLEOTIDE SEQUENCE [GENOMIC DNA]</scope>
    <source>
        <strain>Isolate Qiu 94165 NCU</strain>
    </source>
</reference>
<protein>
    <recommendedName>
        <fullName evidence="1">ATP synthase subunit beta, chloroplastic</fullName>
        <ecNumber evidence="1">7.1.2.2</ecNumber>
    </recommendedName>
    <alternativeName>
        <fullName evidence="1">ATP synthase F1 sector subunit beta</fullName>
    </alternativeName>
    <alternativeName>
        <fullName evidence="1">F-ATPase subunit beta</fullName>
    </alternativeName>
</protein>
<evidence type="ECO:0000255" key="1">
    <source>
        <dbReference type="HAMAP-Rule" id="MF_01347"/>
    </source>
</evidence>
<sequence>MRINPTTSXPGVSTLEEKTLGRITQIIGPVLDVAFPPGKMPNINNSLXVKGRDTVGQQINVTCXVQQLLGNNRVRAVAMSATDGLMRGMEVIDTGAPLSVPVGGSTLGRIFNVLGEPVDNLGPVDTRTTSPIHRSAPAFIQLDTKLSIFETGIKVVDLLAPYRRGGKIGLFGGAGVGKTVLIMELINNIAKAHGGVSVFGGVGERTREGNDLYMEMKESGVINEQNIAESKVALVYGQMNEPPGARMRVGLTALTMAEYFRDVNEQDVLLFIDNISRFVQAGSEVSALLGRMPSAVGYQPTLSTEMGSLQERITSTKEGSITSIQAVYVPADDLTDPAPATTFAHLDATTVLSRGLAAKGIYPAVDPLDSTSTMLQPRIVGEEHYETAQRVKQTSQRYKELQDIIAILGLDELSEEDRLTVARARKIERFLSQPFFVAEVFTGSPGKYVGLAETIRGFQLILSGELDGLPEQAFYLVGNIDEATAKAMNLEVESKLKK</sequence>
<accession>Q9MTX9</accession>
<keyword id="KW-0066">ATP synthesis</keyword>
<keyword id="KW-0067">ATP-binding</keyword>
<keyword id="KW-0139">CF(1)</keyword>
<keyword id="KW-0150">Chloroplast</keyword>
<keyword id="KW-0375">Hydrogen ion transport</keyword>
<keyword id="KW-0406">Ion transport</keyword>
<keyword id="KW-0472">Membrane</keyword>
<keyword id="KW-0547">Nucleotide-binding</keyword>
<keyword id="KW-0934">Plastid</keyword>
<keyword id="KW-0793">Thylakoid</keyword>
<keyword id="KW-1278">Translocase</keyword>
<keyword id="KW-0813">Transport</keyword>